<reference key="1">
    <citation type="journal article" date="1996" name="J. Mol. Evol.">
        <title>A comparison of the nucleotide sequences of the adk and recA genes of pathogenic and commensal Neisseria species: evidence for extensive interspecies recombination within adk.</title>
        <authorList>
            <person name="Feil E."/>
            <person name="Zhou J."/>
            <person name="Maynard Smith J."/>
            <person name="Spratt B.G."/>
        </authorList>
    </citation>
    <scope>NUCLEOTIDE SEQUENCE [GENOMIC DNA]</scope>
    <source>
        <strain>LNP 405</strain>
    </source>
</reference>
<reference key="2">
    <citation type="submission" date="1998-01" db="EMBL/GenBank/DDBJ databases">
        <title>Do sexual bacteria have species?</title>
        <authorList>
            <person name="Smith N.H."/>
            <person name="Donovan G.M."/>
            <person name="Carpenter A."/>
            <person name="Spratt B.G."/>
        </authorList>
    </citation>
    <scope>NUCLEOTIDE SEQUENCE [GENOMIC DNA] OF 18-254</scope>
    <source>
        <strain>Vedros M1801</strain>
    </source>
</reference>
<sequence>SIMKMDGSQQEENLDVISTGSLGVDLALGVGGLPRGRVVEIFGPESSGKTTLCLEAIAQCQKNGGICAFIDAEHAFDPIYARKLGVKVEELYLSQPDTGEQALEICDTLVRSGGVDMVVVDSVAALVPKAEIEGEMGDSHVGLQARLMSQALRKLTGHIKRTNTLVVFINQIRMKIGVMFGSPETTTGGNALKFYASVRLDIRRTGQIKKGDDVIGNETKVKVIKNKVAPPFRQAEFDILYGEGVSWEGELIDLGVKYDIVEKSGAWYSYNGAK</sequence>
<gene>
    <name evidence="1" type="primary">recA</name>
</gene>
<comment type="function">
    <text evidence="1">Can catalyze the hydrolysis of ATP in the presence of single-stranded DNA, the ATP-dependent uptake of single-stranded DNA by duplex DNA, and the ATP-dependent hybridization of homologous single-stranded DNAs. It interacts with LexA causing its activation and leading to its autocatalytic cleavage.</text>
</comment>
<comment type="subcellular location">
    <subcellularLocation>
        <location evidence="1">Cytoplasm</location>
    </subcellularLocation>
</comment>
<comment type="similarity">
    <text evidence="1">Belongs to the RecA family.</text>
</comment>
<dbReference type="EMBL" id="U57908">
    <property type="protein sequence ID" value="AAB49197.1"/>
    <property type="molecule type" value="Genomic_DNA"/>
</dbReference>
<dbReference type="EMBL" id="AJ223875">
    <property type="protein sequence ID" value="CAA11606.1"/>
    <property type="molecule type" value="Genomic_DNA"/>
</dbReference>
<dbReference type="SMR" id="Q59619"/>
<dbReference type="GO" id="GO:0005829">
    <property type="term" value="C:cytosol"/>
    <property type="evidence" value="ECO:0007669"/>
    <property type="project" value="TreeGrafter"/>
</dbReference>
<dbReference type="GO" id="GO:0005524">
    <property type="term" value="F:ATP binding"/>
    <property type="evidence" value="ECO:0007669"/>
    <property type="project" value="UniProtKB-KW"/>
</dbReference>
<dbReference type="GO" id="GO:0016887">
    <property type="term" value="F:ATP hydrolysis activity"/>
    <property type="evidence" value="ECO:0007669"/>
    <property type="project" value="InterPro"/>
</dbReference>
<dbReference type="GO" id="GO:0140664">
    <property type="term" value="F:ATP-dependent DNA damage sensor activity"/>
    <property type="evidence" value="ECO:0007669"/>
    <property type="project" value="InterPro"/>
</dbReference>
<dbReference type="GO" id="GO:0003697">
    <property type="term" value="F:single-stranded DNA binding"/>
    <property type="evidence" value="ECO:0007669"/>
    <property type="project" value="InterPro"/>
</dbReference>
<dbReference type="GO" id="GO:0006310">
    <property type="term" value="P:DNA recombination"/>
    <property type="evidence" value="ECO:0007669"/>
    <property type="project" value="UniProtKB-KW"/>
</dbReference>
<dbReference type="GO" id="GO:0006281">
    <property type="term" value="P:DNA repair"/>
    <property type="evidence" value="ECO:0007669"/>
    <property type="project" value="UniProtKB-KW"/>
</dbReference>
<dbReference type="GO" id="GO:0009432">
    <property type="term" value="P:SOS response"/>
    <property type="evidence" value="ECO:0007669"/>
    <property type="project" value="UniProtKB-KW"/>
</dbReference>
<dbReference type="CDD" id="cd00983">
    <property type="entry name" value="RecA"/>
    <property type="match status" value="1"/>
</dbReference>
<dbReference type="FunFam" id="3.40.50.300:FF:000087">
    <property type="entry name" value="Recombinase RecA"/>
    <property type="match status" value="1"/>
</dbReference>
<dbReference type="Gene3D" id="3.40.50.300">
    <property type="entry name" value="P-loop containing nucleotide triphosphate hydrolases"/>
    <property type="match status" value="1"/>
</dbReference>
<dbReference type="HAMAP" id="MF_00268">
    <property type="entry name" value="RecA"/>
    <property type="match status" value="1"/>
</dbReference>
<dbReference type="InterPro" id="IPR003593">
    <property type="entry name" value="AAA+_ATPase"/>
</dbReference>
<dbReference type="InterPro" id="IPR013765">
    <property type="entry name" value="DNA_recomb/repair_RecA"/>
</dbReference>
<dbReference type="InterPro" id="IPR020584">
    <property type="entry name" value="DNA_recomb/repair_RecA_CS"/>
</dbReference>
<dbReference type="InterPro" id="IPR027417">
    <property type="entry name" value="P-loop_NTPase"/>
</dbReference>
<dbReference type="InterPro" id="IPR049261">
    <property type="entry name" value="RecA-like_C"/>
</dbReference>
<dbReference type="InterPro" id="IPR049428">
    <property type="entry name" value="RecA-like_N"/>
</dbReference>
<dbReference type="InterPro" id="IPR020588">
    <property type="entry name" value="RecA_ATP-bd"/>
</dbReference>
<dbReference type="InterPro" id="IPR023400">
    <property type="entry name" value="RecA_C_sf"/>
</dbReference>
<dbReference type="InterPro" id="IPR020587">
    <property type="entry name" value="RecA_monomer-monomer_interface"/>
</dbReference>
<dbReference type="NCBIfam" id="TIGR02012">
    <property type="entry name" value="tigrfam_recA"/>
    <property type="match status" value="1"/>
</dbReference>
<dbReference type="PANTHER" id="PTHR45900:SF1">
    <property type="entry name" value="MITOCHONDRIAL DNA REPAIR PROTEIN RECA HOMOLOG-RELATED"/>
    <property type="match status" value="1"/>
</dbReference>
<dbReference type="PANTHER" id="PTHR45900">
    <property type="entry name" value="RECA"/>
    <property type="match status" value="1"/>
</dbReference>
<dbReference type="Pfam" id="PF00154">
    <property type="entry name" value="RecA"/>
    <property type="match status" value="1"/>
</dbReference>
<dbReference type="Pfam" id="PF21096">
    <property type="entry name" value="RecA_C"/>
    <property type="match status" value="1"/>
</dbReference>
<dbReference type="PRINTS" id="PR00142">
    <property type="entry name" value="RECA"/>
</dbReference>
<dbReference type="SMART" id="SM00382">
    <property type="entry name" value="AAA"/>
    <property type="match status" value="1"/>
</dbReference>
<dbReference type="SUPFAM" id="SSF52540">
    <property type="entry name" value="P-loop containing nucleoside triphosphate hydrolases"/>
    <property type="match status" value="1"/>
</dbReference>
<dbReference type="SUPFAM" id="SSF54752">
    <property type="entry name" value="RecA protein, C-terminal domain"/>
    <property type="match status" value="1"/>
</dbReference>
<dbReference type="PROSITE" id="PS00321">
    <property type="entry name" value="RECA_1"/>
    <property type="match status" value="1"/>
</dbReference>
<dbReference type="PROSITE" id="PS50162">
    <property type="entry name" value="RECA_2"/>
    <property type="match status" value="1"/>
</dbReference>
<dbReference type="PROSITE" id="PS50163">
    <property type="entry name" value="RECA_3"/>
    <property type="match status" value="1"/>
</dbReference>
<organism>
    <name type="scientific">Neisseria mucosa</name>
    <dbReference type="NCBI Taxonomy" id="488"/>
    <lineage>
        <taxon>Bacteria</taxon>
        <taxon>Pseudomonadati</taxon>
        <taxon>Pseudomonadota</taxon>
        <taxon>Betaproteobacteria</taxon>
        <taxon>Neisseriales</taxon>
        <taxon>Neisseriaceae</taxon>
        <taxon>Neisseria</taxon>
    </lineage>
</organism>
<protein>
    <recommendedName>
        <fullName evidence="1">Protein RecA</fullName>
    </recommendedName>
    <alternativeName>
        <fullName evidence="1">Recombinase A</fullName>
    </alternativeName>
</protein>
<name>RECA_NEIMU</name>
<accession>Q59619</accession>
<accession>O86398</accession>
<keyword id="KW-0067">ATP-binding</keyword>
<keyword id="KW-0963">Cytoplasm</keyword>
<keyword id="KW-0227">DNA damage</keyword>
<keyword id="KW-0233">DNA recombination</keyword>
<keyword id="KW-0234">DNA repair</keyword>
<keyword id="KW-0238">DNA-binding</keyword>
<keyword id="KW-0547">Nucleotide-binding</keyword>
<keyword id="KW-0742">SOS response</keyword>
<feature type="chain" id="PRO_0000122779" description="Protein RecA">
    <location>
        <begin position="1" status="less than"/>
        <end position="274" status="greater than"/>
    </location>
</feature>
<feature type="binding site" evidence="1">
    <location>
        <begin position="43"/>
        <end position="50"/>
    </location>
    <ligand>
        <name>ATP</name>
        <dbReference type="ChEBI" id="CHEBI:30616"/>
    </ligand>
</feature>
<feature type="sequence variant" description="In strain: Vedros M1801.">
    <original>F</original>
    <variation>L</variation>
    <location>
        <position position="42"/>
    </location>
</feature>
<feature type="sequence variant" description="In strain: Vedros M1801.">
    <original>K</original>
    <variation>N</variation>
    <location>
        <position position="49"/>
    </location>
</feature>
<feature type="sequence variant" description="In strain: Vedros M1801.">
    <original>V</original>
    <variation>I</variation>
    <location>
        <position position="115"/>
    </location>
</feature>
<feature type="sequence variant" description="In strain: Vedros M1801.">
    <original>V</original>
    <variation>I</variation>
    <location>
        <position position="245"/>
    </location>
</feature>
<feature type="non-terminal residue">
    <location>
        <position position="1"/>
    </location>
</feature>
<feature type="non-terminal residue">
    <location>
        <position position="274"/>
    </location>
</feature>
<proteinExistence type="inferred from homology"/>
<evidence type="ECO:0000255" key="1">
    <source>
        <dbReference type="HAMAP-Rule" id="MF_00268"/>
    </source>
</evidence>